<name>PROF1_ARTVU</name>
<comment type="function">
    <text evidence="1 3">Binds to actin and affects the structure of the cytoskeleton. At high concentrations, profilin prevents the polymerization of actin, whereas it enhances it at low concentrations. By binding to PIP2, it inhibits the formation of IP3 and DG (By similarity). Possesses high binding affinity for poly(L-proline) (PubMed:27231348).</text>
</comment>
<comment type="subunit">
    <text evidence="2">Dimer and tetramer (PubMed:12530543). Occurs in many kinds of cells as a complex with monomeric actin in a 1:1 ratio.</text>
</comment>
<comment type="subcellular location">
    <subcellularLocation>
        <location evidence="1">Cytoplasm</location>
        <location evidence="1">Cytoskeleton</location>
    </subcellularLocation>
</comment>
<comment type="mass spectrometry" mass="14077.0" method="MALDI" evidence="2"/>
<comment type="allergen">
    <text evidence="2">Causes an allergic reaction in human (PubMed:12530543). Binds to IgE of mugwort pollen-sensitized patients (PubMed:12530543).</text>
</comment>
<comment type="similarity">
    <text evidence="5">Belongs to the profilin family.</text>
</comment>
<reference key="1">
    <citation type="journal article" date="2002" name="Biol. Chem.">
        <title>Molecular and immunological characterization of profilin from mugwort pollen.</title>
        <authorList>
            <person name="Wopfner N."/>
            <person name="Willeroidee M."/>
            <person name="Hebenstreit D."/>
            <person name="van Ree R."/>
            <person name="Aalbers M."/>
            <person name="Briza P."/>
            <person name="Thalhamer J."/>
            <person name="Ebner C."/>
            <person name="Richter K."/>
            <person name="Ferreira F."/>
        </authorList>
    </citation>
    <scope>NUCLEOTIDE SEQUENCE [MRNA]</scope>
    <scope>SUBUNIT</scope>
    <scope>MASS SPECTROMETRY</scope>
    <scope>CLEAVAGE OF INITIATOR METHIONINE</scope>
    <source>
        <tissue>Pollen</tissue>
    </source>
</reference>
<reference key="2">
    <citation type="journal article" date="2016" name="J. Biol. Chem.">
        <title>Structural, functional, and immunological characterization of profilin panallergens Amb a 8, Art v 4, and Bet v 2.</title>
        <authorList>
            <person name="Offermann L.R."/>
            <person name="Schlachter C.R."/>
            <person name="Perdue M.L."/>
            <person name="Majorek K.A."/>
            <person name="He J.Z."/>
            <person name="Booth W.T."/>
            <person name="Garrett J."/>
            <person name="Kowal K."/>
            <person name="Chruszcz M."/>
        </authorList>
    </citation>
    <scope>X-RAY CRYSTALLOGRAPHY (1.10 ANGSTROMS) OF 2-133</scope>
    <scope>FUNCTION</scope>
    <scope>ALLERGEN</scope>
    <scope>DISULFIDE BONDS</scope>
</reference>
<protein>
    <recommendedName>
        <fullName evidence="5">Profilin-1</fullName>
    </recommendedName>
    <alternativeName>
        <fullName evidence="4">Pollen allergen Art v 4.01</fullName>
    </alternativeName>
    <allergenName evidence="4">Art v 4.01</allergenName>
</protein>
<dbReference type="EMBL" id="AJ421030">
    <property type="protein sequence ID" value="CAD12861.1"/>
    <property type="molecule type" value="mRNA"/>
</dbReference>
<dbReference type="PDB" id="5EM0">
    <property type="method" value="X-ray"/>
    <property type="resolution" value="1.10 A"/>
    <property type="chains" value="A=2-133"/>
</dbReference>
<dbReference type="PDB" id="6B6J">
    <property type="method" value="X-ray"/>
    <property type="resolution" value="1.90 A"/>
    <property type="chains" value="A=2-133"/>
</dbReference>
<dbReference type="PDBsum" id="5EM0"/>
<dbReference type="PDBsum" id="6B6J"/>
<dbReference type="SMR" id="Q8H2C9"/>
<dbReference type="Allergome" id="1652">
    <property type="allergen name" value="Art v 4.0101"/>
</dbReference>
<dbReference type="Allergome" id="60">
    <property type="allergen name" value="Art v 4"/>
</dbReference>
<dbReference type="GO" id="GO:0005938">
    <property type="term" value="C:cell cortex"/>
    <property type="evidence" value="ECO:0007669"/>
    <property type="project" value="TreeGrafter"/>
</dbReference>
<dbReference type="GO" id="GO:0005856">
    <property type="term" value="C:cytoskeleton"/>
    <property type="evidence" value="ECO:0007669"/>
    <property type="project" value="UniProtKB-SubCell"/>
</dbReference>
<dbReference type="GO" id="GO:0003785">
    <property type="term" value="F:actin monomer binding"/>
    <property type="evidence" value="ECO:0007669"/>
    <property type="project" value="TreeGrafter"/>
</dbReference>
<dbReference type="GO" id="GO:1900750">
    <property type="term" value="F:oligopeptide binding"/>
    <property type="evidence" value="ECO:0000314"/>
    <property type="project" value="UniProtKB"/>
</dbReference>
<dbReference type="CDD" id="cd00148">
    <property type="entry name" value="PROF"/>
    <property type="match status" value="1"/>
</dbReference>
<dbReference type="FunFam" id="3.30.450.30:FF:000001">
    <property type="entry name" value="Profilin"/>
    <property type="match status" value="1"/>
</dbReference>
<dbReference type="Gene3D" id="3.30.450.30">
    <property type="entry name" value="Dynein light chain 2a, cytoplasmic"/>
    <property type="match status" value="1"/>
</dbReference>
<dbReference type="InterPro" id="IPR048278">
    <property type="entry name" value="PFN"/>
</dbReference>
<dbReference type="InterPro" id="IPR005455">
    <property type="entry name" value="PFN_euk"/>
</dbReference>
<dbReference type="InterPro" id="IPR036140">
    <property type="entry name" value="PFN_sf"/>
</dbReference>
<dbReference type="InterPro" id="IPR027310">
    <property type="entry name" value="Profilin_CS"/>
</dbReference>
<dbReference type="PANTHER" id="PTHR11604">
    <property type="entry name" value="PROFILIN"/>
    <property type="match status" value="1"/>
</dbReference>
<dbReference type="PANTHER" id="PTHR11604:SF25">
    <property type="entry name" value="PROFILIN-5"/>
    <property type="match status" value="1"/>
</dbReference>
<dbReference type="Pfam" id="PF00235">
    <property type="entry name" value="Profilin"/>
    <property type="match status" value="1"/>
</dbReference>
<dbReference type="PRINTS" id="PR00392">
    <property type="entry name" value="PROFILIN"/>
</dbReference>
<dbReference type="PRINTS" id="PR01640">
    <property type="entry name" value="PROFILINPLNT"/>
</dbReference>
<dbReference type="SMART" id="SM00392">
    <property type="entry name" value="PROF"/>
    <property type="match status" value="1"/>
</dbReference>
<dbReference type="SUPFAM" id="SSF55770">
    <property type="entry name" value="Profilin (actin-binding protein)"/>
    <property type="match status" value="1"/>
</dbReference>
<dbReference type="PROSITE" id="PS00414">
    <property type="entry name" value="PROFILIN"/>
    <property type="match status" value="1"/>
</dbReference>
<evidence type="ECO:0000250" key="1">
    <source>
        <dbReference type="UniProtKB" id="Q9FR39"/>
    </source>
</evidence>
<evidence type="ECO:0000269" key="2">
    <source>
    </source>
</evidence>
<evidence type="ECO:0000269" key="3">
    <source>
    </source>
</evidence>
<evidence type="ECO:0000303" key="4">
    <source>
    </source>
</evidence>
<evidence type="ECO:0000305" key="5"/>
<evidence type="ECO:0007744" key="6">
    <source>
        <dbReference type="PDB" id="5EM0"/>
    </source>
</evidence>
<evidence type="ECO:0007744" key="7">
    <source>
        <dbReference type="PDB" id="6B6J"/>
    </source>
</evidence>
<evidence type="ECO:0007829" key="8">
    <source>
        <dbReference type="PDB" id="5EM0"/>
    </source>
</evidence>
<keyword id="KW-0002">3D-structure</keyword>
<keyword id="KW-0009">Actin-binding</keyword>
<keyword id="KW-0020">Allergen</keyword>
<keyword id="KW-0963">Cytoplasm</keyword>
<keyword id="KW-0206">Cytoskeleton</keyword>
<keyword id="KW-1015">Disulfide bond</keyword>
<organism>
    <name type="scientific">Artemisia vulgaris</name>
    <name type="common">Mugwort</name>
    <dbReference type="NCBI Taxonomy" id="4220"/>
    <lineage>
        <taxon>Eukaryota</taxon>
        <taxon>Viridiplantae</taxon>
        <taxon>Streptophyta</taxon>
        <taxon>Embryophyta</taxon>
        <taxon>Tracheophyta</taxon>
        <taxon>Spermatophyta</taxon>
        <taxon>Magnoliopsida</taxon>
        <taxon>eudicotyledons</taxon>
        <taxon>Gunneridae</taxon>
        <taxon>Pentapetalae</taxon>
        <taxon>asterids</taxon>
        <taxon>campanulids</taxon>
        <taxon>Asterales</taxon>
        <taxon>Asteraceae</taxon>
        <taxon>Asteroideae</taxon>
        <taxon>Anthemideae</taxon>
        <taxon>Artemisiinae</taxon>
        <taxon>Artemisia</taxon>
    </lineage>
</organism>
<proteinExistence type="evidence at protein level"/>
<sequence length="133" mass="14207">MSWQTYVDDHLMCDIEGTGQHLTSAAIFGTDGTVWAKSASFPEFKPNEIDAIIKEFNEAGQLAPTGLFLGGAKYMVIQGEAGAVIRGKKGAGGICIKKTGQAMVFGIYDEPVAPGQCNMVVERLGDYLLDQGM</sequence>
<accession>Q8H2C9</accession>
<feature type="initiator methionine" description="Removed" evidence="2">
    <location>
        <position position="1"/>
    </location>
</feature>
<feature type="chain" id="PRO_0000199620" description="Profilin-1">
    <location>
        <begin position="2"/>
        <end position="133"/>
    </location>
</feature>
<feature type="disulfide bond" evidence="3 6 7">
    <location>
        <begin position="95"/>
        <end position="117"/>
    </location>
</feature>
<feature type="helix" evidence="8">
    <location>
        <begin position="3"/>
        <end position="10"/>
    </location>
</feature>
<feature type="helix" evidence="8">
    <location>
        <begin position="15"/>
        <end position="17"/>
    </location>
</feature>
<feature type="strand" evidence="8">
    <location>
        <begin position="23"/>
        <end position="29"/>
    </location>
</feature>
<feature type="strand" evidence="8">
    <location>
        <begin position="34"/>
        <end position="37"/>
    </location>
</feature>
<feature type="helix" evidence="8">
    <location>
        <begin position="46"/>
        <end position="57"/>
    </location>
</feature>
<feature type="turn" evidence="8">
    <location>
        <begin position="63"/>
        <end position="65"/>
    </location>
</feature>
<feature type="strand" evidence="8">
    <location>
        <begin position="67"/>
        <end position="69"/>
    </location>
</feature>
<feature type="strand" evidence="8">
    <location>
        <begin position="72"/>
        <end position="80"/>
    </location>
</feature>
<feature type="turn" evidence="8">
    <location>
        <begin position="81"/>
        <end position="83"/>
    </location>
</feature>
<feature type="strand" evidence="8">
    <location>
        <begin position="84"/>
        <end position="89"/>
    </location>
</feature>
<feature type="strand" evidence="8">
    <location>
        <begin position="92"/>
        <end position="98"/>
    </location>
</feature>
<feature type="strand" evidence="8">
    <location>
        <begin position="100"/>
        <end position="108"/>
    </location>
</feature>
<feature type="helix" evidence="8">
    <location>
        <begin position="114"/>
        <end position="130"/>
    </location>
</feature>